<organism>
    <name type="scientific">Shigella flexneri</name>
    <dbReference type="NCBI Taxonomy" id="623"/>
    <lineage>
        <taxon>Bacteria</taxon>
        <taxon>Pseudomonadati</taxon>
        <taxon>Pseudomonadota</taxon>
        <taxon>Gammaproteobacteria</taxon>
        <taxon>Enterobacterales</taxon>
        <taxon>Enterobacteriaceae</taxon>
        <taxon>Shigella</taxon>
    </lineage>
</organism>
<comment type="function">
    <text evidence="1">Involved in the third step of the chorismate pathway, which leads to the biosynthesis of aromatic amino acids. Catalyzes the cis-dehydration of 3-dehydroquinate (DHQ) and introduces the first double bond of the aromatic ring to yield 3-dehydroshikimate.</text>
</comment>
<comment type="catalytic activity">
    <reaction evidence="1">
        <text>3-dehydroquinate = 3-dehydroshikimate + H2O</text>
        <dbReference type="Rhea" id="RHEA:21096"/>
        <dbReference type="ChEBI" id="CHEBI:15377"/>
        <dbReference type="ChEBI" id="CHEBI:16630"/>
        <dbReference type="ChEBI" id="CHEBI:32364"/>
        <dbReference type="EC" id="4.2.1.10"/>
    </reaction>
</comment>
<comment type="pathway">
    <text evidence="1">Metabolic intermediate biosynthesis; chorismate biosynthesis; chorismate from D-erythrose 4-phosphate and phosphoenolpyruvate: step 3/7.</text>
</comment>
<comment type="subunit">
    <text evidence="1">Homodimer.</text>
</comment>
<comment type="similarity">
    <text evidence="1">Belongs to the type-I 3-dehydroquinase family.</text>
</comment>
<keyword id="KW-0028">Amino-acid biosynthesis</keyword>
<keyword id="KW-0057">Aromatic amino acid biosynthesis</keyword>
<keyword id="KW-0456">Lyase</keyword>
<keyword id="KW-1185">Reference proteome</keyword>
<keyword id="KW-0704">Schiff base</keyword>
<gene>
    <name evidence="1" type="primary">aroD</name>
    <name type="ordered locus">SF1723</name>
    <name type="ordered locus">S1855</name>
</gene>
<reference key="1">
    <citation type="journal article" date="2002" name="Nucleic Acids Res.">
        <title>Genome sequence of Shigella flexneri 2a: insights into pathogenicity through comparison with genomes of Escherichia coli K12 and O157.</title>
        <authorList>
            <person name="Jin Q."/>
            <person name="Yuan Z."/>
            <person name="Xu J."/>
            <person name="Wang Y."/>
            <person name="Shen Y."/>
            <person name="Lu W."/>
            <person name="Wang J."/>
            <person name="Liu H."/>
            <person name="Yang J."/>
            <person name="Yang F."/>
            <person name="Zhang X."/>
            <person name="Zhang J."/>
            <person name="Yang G."/>
            <person name="Wu H."/>
            <person name="Qu D."/>
            <person name="Dong J."/>
            <person name="Sun L."/>
            <person name="Xue Y."/>
            <person name="Zhao A."/>
            <person name="Gao Y."/>
            <person name="Zhu J."/>
            <person name="Kan B."/>
            <person name="Ding K."/>
            <person name="Chen S."/>
            <person name="Cheng H."/>
            <person name="Yao Z."/>
            <person name="He B."/>
            <person name="Chen R."/>
            <person name="Ma D."/>
            <person name="Qiang B."/>
            <person name="Wen Y."/>
            <person name="Hou Y."/>
            <person name="Yu J."/>
        </authorList>
    </citation>
    <scope>NUCLEOTIDE SEQUENCE [LARGE SCALE GENOMIC DNA]</scope>
    <source>
        <strain>301 / Serotype 2a</strain>
    </source>
</reference>
<reference key="2">
    <citation type="journal article" date="2003" name="Infect. Immun.">
        <title>Complete genome sequence and comparative genomics of Shigella flexneri serotype 2a strain 2457T.</title>
        <authorList>
            <person name="Wei J."/>
            <person name="Goldberg M.B."/>
            <person name="Burland V."/>
            <person name="Venkatesan M.M."/>
            <person name="Deng W."/>
            <person name="Fournier G."/>
            <person name="Mayhew G.F."/>
            <person name="Plunkett G. III"/>
            <person name="Rose D.J."/>
            <person name="Darling A."/>
            <person name="Mau B."/>
            <person name="Perna N.T."/>
            <person name="Payne S.M."/>
            <person name="Runyen-Janecky L.J."/>
            <person name="Zhou S."/>
            <person name="Schwartz D.C."/>
            <person name="Blattner F.R."/>
        </authorList>
    </citation>
    <scope>NUCLEOTIDE SEQUENCE [LARGE SCALE GENOMIC DNA]</scope>
    <source>
        <strain>ATCC 700930 / 2457T / Serotype 2a</strain>
    </source>
</reference>
<proteinExistence type="inferred from homology"/>
<feature type="chain" id="PRO_1000043183" description="3-dehydroquinate dehydratase">
    <location>
        <begin position="1"/>
        <end position="252"/>
    </location>
</feature>
<feature type="active site" description="Proton donor/acceptor" evidence="1">
    <location>
        <position position="143"/>
    </location>
</feature>
<feature type="active site" description="Schiff-base intermediate with substrate" evidence="1">
    <location>
        <position position="170"/>
    </location>
</feature>
<feature type="binding site" evidence="1">
    <location>
        <position position="21"/>
    </location>
    <ligand>
        <name>3-dehydroquinate</name>
        <dbReference type="ChEBI" id="CHEBI:32364"/>
    </ligand>
</feature>
<feature type="binding site" evidence="1">
    <location>
        <begin position="46"/>
        <end position="48"/>
    </location>
    <ligand>
        <name>3-dehydroquinate</name>
        <dbReference type="ChEBI" id="CHEBI:32364"/>
    </ligand>
</feature>
<feature type="binding site" evidence="1">
    <location>
        <position position="82"/>
    </location>
    <ligand>
        <name>3-dehydroquinate</name>
        <dbReference type="ChEBI" id="CHEBI:32364"/>
    </ligand>
</feature>
<feature type="binding site" evidence="1">
    <location>
        <position position="213"/>
    </location>
    <ligand>
        <name>3-dehydroquinate</name>
        <dbReference type="ChEBI" id="CHEBI:32364"/>
    </ligand>
</feature>
<feature type="binding site" evidence="1">
    <location>
        <position position="232"/>
    </location>
    <ligand>
        <name>3-dehydroquinate</name>
        <dbReference type="ChEBI" id="CHEBI:32364"/>
    </ligand>
</feature>
<feature type="binding site" evidence="1">
    <location>
        <position position="236"/>
    </location>
    <ligand>
        <name>3-dehydroquinate</name>
        <dbReference type="ChEBI" id="CHEBI:32364"/>
    </ligand>
</feature>
<sequence length="252" mass="27518">MKTVTVKDLVIGAGAPKIIVSLMAKDIARVKSEALAYREADFDILEWRVDHFADLSNVESVMAAAKILRETMPEKPLLFTFRSAKEGGEQAISTEAYIALNRAAIDSGLVDMIDLELFTGDDQVKETVAYAHAHDVKVVMSNHDFHKTPEAEEIIARLRKMQSFDADIPKIALMPQSTSDVLTLLAATLEMQEQYADRPIITMSMAKTGVISRLVGEVFGSAATFGAVKKASAPGQISVNDLRTVLTILHQA</sequence>
<dbReference type="EC" id="4.2.1.10" evidence="1"/>
<dbReference type="EMBL" id="AE005674">
    <property type="protein sequence ID" value="AAN43299.1"/>
    <property type="molecule type" value="Genomic_DNA"/>
</dbReference>
<dbReference type="EMBL" id="AE014073">
    <property type="protein sequence ID" value="AAP17187.1"/>
    <property type="molecule type" value="Genomic_DNA"/>
</dbReference>
<dbReference type="RefSeq" id="NP_707592.1">
    <property type="nucleotide sequence ID" value="NC_004337.2"/>
</dbReference>
<dbReference type="RefSeq" id="WP_000860164.1">
    <property type="nucleotide sequence ID" value="NZ_WPGW01000073.1"/>
</dbReference>
<dbReference type="SMR" id="Q83RA1"/>
<dbReference type="STRING" id="198214.SF1723"/>
<dbReference type="PaxDb" id="198214-SF1723"/>
<dbReference type="GeneID" id="1024864"/>
<dbReference type="KEGG" id="sfl:SF1723"/>
<dbReference type="KEGG" id="sfx:S1855"/>
<dbReference type="PATRIC" id="fig|198214.7.peg.2037"/>
<dbReference type="HOGENOM" id="CLU_064444_0_0_6"/>
<dbReference type="UniPathway" id="UPA00053">
    <property type="reaction ID" value="UER00086"/>
</dbReference>
<dbReference type="Proteomes" id="UP000001006">
    <property type="component" value="Chromosome"/>
</dbReference>
<dbReference type="Proteomes" id="UP000002673">
    <property type="component" value="Chromosome"/>
</dbReference>
<dbReference type="GO" id="GO:0003855">
    <property type="term" value="F:3-dehydroquinate dehydratase activity"/>
    <property type="evidence" value="ECO:0007669"/>
    <property type="project" value="UniProtKB-UniRule"/>
</dbReference>
<dbReference type="GO" id="GO:0046279">
    <property type="term" value="P:3,4-dihydroxybenzoate biosynthetic process"/>
    <property type="evidence" value="ECO:0007669"/>
    <property type="project" value="UniProtKB-ARBA"/>
</dbReference>
<dbReference type="GO" id="GO:0008652">
    <property type="term" value="P:amino acid biosynthetic process"/>
    <property type="evidence" value="ECO:0007669"/>
    <property type="project" value="UniProtKB-KW"/>
</dbReference>
<dbReference type="GO" id="GO:0009073">
    <property type="term" value="P:aromatic amino acid family biosynthetic process"/>
    <property type="evidence" value="ECO:0007669"/>
    <property type="project" value="UniProtKB-KW"/>
</dbReference>
<dbReference type="GO" id="GO:0009423">
    <property type="term" value="P:chorismate biosynthetic process"/>
    <property type="evidence" value="ECO:0007669"/>
    <property type="project" value="UniProtKB-UniRule"/>
</dbReference>
<dbReference type="CDD" id="cd00502">
    <property type="entry name" value="DHQase_I"/>
    <property type="match status" value="1"/>
</dbReference>
<dbReference type="FunFam" id="3.20.20.70:FF:000047">
    <property type="entry name" value="3-dehydroquinate dehydratase"/>
    <property type="match status" value="1"/>
</dbReference>
<dbReference type="Gene3D" id="3.20.20.70">
    <property type="entry name" value="Aldolase class I"/>
    <property type="match status" value="1"/>
</dbReference>
<dbReference type="HAMAP" id="MF_00214">
    <property type="entry name" value="AroD"/>
    <property type="match status" value="1"/>
</dbReference>
<dbReference type="InterPro" id="IPR018508">
    <property type="entry name" value="3-dehydroquinate_DH_AS"/>
</dbReference>
<dbReference type="InterPro" id="IPR013785">
    <property type="entry name" value="Aldolase_TIM"/>
</dbReference>
<dbReference type="InterPro" id="IPR001381">
    <property type="entry name" value="DHquinase_I"/>
</dbReference>
<dbReference type="InterPro" id="IPR050146">
    <property type="entry name" value="Type-I_3-dehydroquinase"/>
</dbReference>
<dbReference type="NCBIfam" id="TIGR01093">
    <property type="entry name" value="aroD"/>
    <property type="match status" value="1"/>
</dbReference>
<dbReference type="PANTHER" id="PTHR43699">
    <property type="entry name" value="3-DEHYDROQUINATE DEHYDRATASE"/>
    <property type="match status" value="1"/>
</dbReference>
<dbReference type="PANTHER" id="PTHR43699:SF1">
    <property type="entry name" value="3-DEHYDROQUINATE DEHYDRATASE"/>
    <property type="match status" value="1"/>
</dbReference>
<dbReference type="Pfam" id="PF01487">
    <property type="entry name" value="DHquinase_I"/>
    <property type="match status" value="1"/>
</dbReference>
<dbReference type="SUPFAM" id="SSF51569">
    <property type="entry name" value="Aldolase"/>
    <property type="match status" value="1"/>
</dbReference>
<dbReference type="PROSITE" id="PS01028">
    <property type="entry name" value="DEHYDROQUINASE_I"/>
    <property type="match status" value="1"/>
</dbReference>
<protein>
    <recommendedName>
        <fullName evidence="1">3-dehydroquinate dehydratase</fullName>
        <shortName evidence="1">3-dehydroquinase</shortName>
        <ecNumber evidence="1">4.2.1.10</ecNumber>
    </recommendedName>
    <alternativeName>
        <fullName evidence="1">Type I DHQase</fullName>
    </alternativeName>
    <alternativeName>
        <fullName evidence="1">Type I dehydroquinase</fullName>
        <shortName evidence="1">DHQ1</shortName>
    </alternativeName>
</protein>
<accession>Q83RA1</accession>
<accession>Q7C1E0</accession>
<evidence type="ECO:0000255" key="1">
    <source>
        <dbReference type="HAMAP-Rule" id="MF_00214"/>
    </source>
</evidence>
<name>AROD_SHIFL</name>